<comment type="function">
    <text evidence="1">This protein is one of the early assembly proteins of the 50S ribosomal subunit, although it is not seen to bind rRNA by itself. It is important during the early stages of 50S assembly.</text>
</comment>
<comment type="subunit">
    <text evidence="1">Part of the 50S ribosomal subunit.</text>
</comment>
<comment type="similarity">
    <text evidence="1">Belongs to the universal ribosomal protein uL13 family.</text>
</comment>
<proteinExistence type="inferred from homology"/>
<sequence>MARPFPIQRTSIVREAGKKWFVVDASGKVLGRLASQIAKYLMGKNEPTFFPGVDNGNYVVVINADKVLLTGKKLDKKMYYHYSGYPGGLKQLTARQLLEKHPERLIYLAVKRMLPKAALGTKYLKRLKVYASDSHPHEAQKPQPLEF</sequence>
<protein>
    <recommendedName>
        <fullName evidence="1">Large ribosomal subunit protein uL13</fullName>
    </recommendedName>
    <alternativeName>
        <fullName evidence="2">50S ribosomal protein L13</fullName>
    </alternativeName>
</protein>
<reference key="1">
    <citation type="submission" date="2007-08" db="EMBL/GenBank/DDBJ databases">
        <title>Complete sequence of Thermotoga lettingae TMO.</title>
        <authorList>
            <consortium name="US DOE Joint Genome Institute"/>
            <person name="Copeland A."/>
            <person name="Lucas S."/>
            <person name="Lapidus A."/>
            <person name="Barry K."/>
            <person name="Glavina del Rio T."/>
            <person name="Dalin E."/>
            <person name="Tice H."/>
            <person name="Pitluck S."/>
            <person name="Foster B."/>
            <person name="Bruce D."/>
            <person name="Schmutz J."/>
            <person name="Larimer F."/>
            <person name="Land M."/>
            <person name="Hauser L."/>
            <person name="Kyrpides N."/>
            <person name="Mikhailova N."/>
            <person name="Nelson K."/>
            <person name="Gogarten J.P."/>
            <person name="Noll K."/>
            <person name="Richardson P."/>
        </authorList>
    </citation>
    <scope>NUCLEOTIDE SEQUENCE [LARGE SCALE GENOMIC DNA]</scope>
    <source>
        <strain>ATCC BAA-301 / DSM 14385 / NBRC 107922 / TMO</strain>
    </source>
</reference>
<accession>A8F8P6</accession>
<feature type="chain" id="PRO_1000067999" description="Large ribosomal subunit protein uL13">
    <location>
        <begin position="1"/>
        <end position="147"/>
    </location>
</feature>
<organism>
    <name type="scientific">Pseudothermotoga lettingae (strain ATCC BAA-301 / DSM 14385 / NBRC 107922 / TMO)</name>
    <name type="common">Thermotoga lettingae</name>
    <dbReference type="NCBI Taxonomy" id="416591"/>
    <lineage>
        <taxon>Bacteria</taxon>
        <taxon>Thermotogati</taxon>
        <taxon>Thermotogota</taxon>
        <taxon>Thermotogae</taxon>
        <taxon>Thermotogales</taxon>
        <taxon>Thermotogaceae</taxon>
        <taxon>Pseudothermotoga</taxon>
    </lineage>
</organism>
<name>RL13_PSELT</name>
<keyword id="KW-1185">Reference proteome</keyword>
<keyword id="KW-0687">Ribonucleoprotein</keyword>
<keyword id="KW-0689">Ribosomal protein</keyword>
<evidence type="ECO:0000255" key="1">
    <source>
        <dbReference type="HAMAP-Rule" id="MF_01366"/>
    </source>
</evidence>
<evidence type="ECO:0000305" key="2"/>
<dbReference type="EMBL" id="CP000812">
    <property type="protein sequence ID" value="ABV34530.1"/>
    <property type="molecule type" value="Genomic_DNA"/>
</dbReference>
<dbReference type="RefSeq" id="WP_012004006.1">
    <property type="nucleotide sequence ID" value="NZ_BSDV01000001.1"/>
</dbReference>
<dbReference type="SMR" id="A8F8P6"/>
<dbReference type="STRING" id="416591.Tlet_1976"/>
<dbReference type="KEGG" id="tle:Tlet_1976"/>
<dbReference type="eggNOG" id="COG0102">
    <property type="taxonomic scope" value="Bacteria"/>
</dbReference>
<dbReference type="HOGENOM" id="CLU_082184_2_2_0"/>
<dbReference type="OrthoDB" id="9801330at2"/>
<dbReference type="Proteomes" id="UP000002016">
    <property type="component" value="Chromosome"/>
</dbReference>
<dbReference type="GO" id="GO:0022625">
    <property type="term" value="C:cytosolic large ribosomal subunit"/>
    <property type="evidence" value="ECO:0007669"/>
    <property type="project" value="TreeGrafter"/>
</dbReference>
<dbReference type="GO" id="GO:0003729">
    <property type="term" value="F:mRNA binding"/>
    <property type="evidence" value="ECO:0007669"/>
    <property type="project" value="TreeGrafter"/>
</dbReference>
<dbReference type="GO" id="GO:0003735">
    <property type="term" value="F:structural constituent of ribosome"/>
    <property type="evidence" value="ECO:0007669"/>
    <property type="project" value="InterPro"/>
</dbReference>
<dbReference type="GO" id="GO:0017148">
    <property type="term" value="P:negative regulation of translation"/>
    <property type="evidence" value="ECO:0007669"/>
    <property type="project" value="TreeGrafter"/>
</dbReference>
<dbReference type="GO" id="GO:0006412">
    <property type="term" value="P:translation"/>
    <property type="evidence" value="ECO:0007669"/>
    <property type="project" value="UniProtKB-UniRule"/>
</dbReference>
<dbReference type="CDD" id="cd00392">
    <property type="entry name" value="Ribosomal_L13"/>
    <property type="match status" value="1"/>
</dbReference>
<dbReference type="FunFam" id="3.90.1180.10:FF:000001">
    <property type="entry name" value="50S ribosomal protein L13"/>
    <property type="match status" value="1"/>
</dbReference>
<dbReference type="Gene3D" id="3.90.1180.10">
    <property type="entry name" value="Ribosomal protein L13"/>
    <property type="match status" value="1"/>
</dbReference>
<dbReference type="HAMAP" id="MF_01366">
    <property type="entry name" value="Ribosomal_uL13"/>
    <property type="match status" value="1"/>
</dbReference>
<dbReference type="InterPro" id="IPR005822">
    <property type="entry name" value="Ribosomal_uL13"/>
</dbReference>
<dbReference type="InterPro" id="IPR005823">
    <property type="entry name" value="Ribosomal_uL13_bac-type"/>
</dbReference>
<dbReference type="InterPro" id="IPR036899">
    <property type="entry name" value="Ribosomal_uL13_sf"/>
</dbReference>
<dbReference type="NCBIfam" id="TIGR01066">
    <property type="entry name" value="rplM_bact"/>
    <property type="match status" value="1"/>
</dbReference>
<dbReference type="PANTHER" id="PTHR11545:SF2">
    <property type="entry name" value="LARGE RIBOSOMAL SUBUNIT PROTEIN UL13M"/>
    <property type="match status" value="1"/>
</dbReference>
<dbReference type="PANTHER" id="PTHR11545">
    <property type="entry name" value="RIBOSOMAL PROTEIN L13"/>
    <property type="match status" value="1"/>
</dbReference>
<dbReference type="Pfam" id="PF00572">
    <property type="entry name" value="Ribosomal_L13"/>
    <property type="match status" value="1"/>
</dbReference>
<dbReference type="PIRSF" id="PIRSF002181">
    <property type="entry name" value="Ribosomal_L13"/>
    <property type="match status" value="1"/>
</dbReference>
<dbReference type="SUPFAM" id="SSF52161">
    <property type="entry name" value="Ribosomal protein L13"/>
    <property type="match status" value="1"/>
</dbReference>
<gene>
    <name evidence="1" type="primary">rplM</name>
    <name type="ordered locus">Tlet_1976</name>
</gene>